<comment type="function">
    <text evidence="1">Catalyzes the conversion of 4-hydroxy-tetrahydrodipicolinate (HTPA) to tetrahydrodipicolinate.</text>
</comment>
<comment type="catalytic activity">
    <reaction evidence="1">
        <text>(S)-2,3,4,5-tetrahydrodipicolinate + NAD(+) + H2O = (2S,4S)-4-hydroxy-2,3,4,5-tetrahydrodipicolinate + NADH + H(+)</text>
        <dbReference type="Rhea" id="RHEA:35323"/>
        <dbReference type="ChEBI" id="CHEBI:15377"/>
        <dbReference type="ChEBI" id="CHEBI:15378"/>
        <dbReference type="ChEBI" id="CHEBI:16845"/>
        <dbReference type="ChEBI" id="CHEBI:57540"/>
        <dbReference type="ChEBI" id="CHEBI:57945"/>
        <dbReference type="ChEBI" id="CHEBI:67139"/>
        <dbReference type="EC" id="1.17.1.8"/>
    </reaction>
</comment>
<comment type="catalytic activity">
    <reaction evidence="1">
        <text>(S)-2,3,4,5-tetrahydrodipicolinate + NADP(+) + H2O = (2S,4S)-4-hydroxy-2,3,4,5-tetrahydrodipicolinate + NADPH + H(+)</text>
        <dbReference type="Rhea" id="RHEA:35331"/>
        <dbReference type="ChEBI" id="CHEBI:15377"/>
        <dbReference type="ChEBI" id="CHEBI:15378"/>
        <dbReference type="ChEBI" id="CHEBI:16845"/>
        <dbReference type="ChEBI" id="CHEBI:57783"/>
        <dbReference type="ChEBI" id="CHEBI:58349"/>
        <dbReference type="ChEBI" id="CHEBI:67139"/>
        <dbReference type="EC" id="1.17.1.8"/>
    </reaction>
</comment>
<comment type="pathway">
    <text evidence="1">Amino-acid biosynthesis; L-lysine biosynthesis via DAP pathway; (S)-tetrahydrodipicolinate from L-aspartate: step 4/4.</text>
</comment>
<comment type="subcellular location">
    <subcellularLocation>
        <location evidence="1">Cytoplasm</location>
    </subcellularLocation>
</comment>
<comment type="similarity">
    <text evidence="1">Belongs to the DapB family.</text>
</comment>
<comment type="caution">
    <text evidence="2">Was originally thought to be a dihydrodipicolinate reductase (DHDPR), catalyzing the conversion of dihydrodipicolinate to tetrahydrodipicolinate. However, it was shown in E.coli that the substrate of the enzymatic reaction is not dihydrodipicolinate (DHDP) but in fact (2S,4S)-4-hydroxy-2,3,4,5-tetrahydrodipicolinic acid (HTPA), the product released by the DapA-catalyzed reaction.</text>
</comment>
<evidence type="ECO:0000255" key="1">
    <source>
        <dbReference type="HAMAP-Rule" id="MF_00102"/>
    </source>
</evidence>
<evidence type="ECO:0000305" key="2"/>
<feature type="chain" id="PRO_0000141430" description="4-hydroxy-tetrahydrodipicolinate reductase">
    <location>
        <begin position="1"/>
        <end position="267"/>
    </location>
</feature>
<feature type="active site" description="Proton donor/acceptor" evidence="1">
    <location>
        <position position="155"/>
    </location>
</feature>
<feature type="active site" description="Proton donor" evidence="1">
    <location>
        <position position="159"/>
    </location>
</feature>
<feature type="binding site" evidence="1">
    <location>
        <begin position="9"/>
        <end position="14"/>
    </location>
    <ligand>
        <name>NAD(+)</name>
        <dbReference type="ChEBI" id="CHEBI:57540"/>
    </ligand>
</feature>
<feature type="binding site" evidence="1">
    <location>
        <position position="35"/>
    </location>
    <ligand>
        <name>NAD(+)</name>
        <dbReference type="ChEBI" id="CHEBI:57540"/>
    </ligand>
</feature>
<feature type="binding site" evidence="1">
    <location>
        <position position="36"/>
    </location>
    <ligand>
        <name>NADP(+)</name>
        <dbReference type="ChEBI" id="CHEBI:58349"/>
    </ligand>
</feature>
<feature type="binding site" evidence="1">
    <location>
        <begin position="98"/>
        <end position="100"/>
    </location>
    <ligand>
        <name>NAD(+)</name>
        <dbReference type="ChEBI" id="CHEBI:57540"/>
    </ligand>
</feature>
<feature type="binding site" evidence="1">
    <location>
        <begin position="122"/>
        <end position="125"/>
    </location>
    <ligand>
        <name>NAD(+)</name>
        <dbReference type="ChEBI" id="CHEBI:57540"/>
    </ligand>
</feature>
<feature type="binding site" evidence="1">
    <location>
        <position position="156"/>
    </location>
    <ligand>
        <name>(S)-2,3,4,5-tetrahydrodipicolinate</name>
        <dbReference type="ChEBI" id="CHEBI:16845"/>
    </ligand>
</feature>
<feature type="binding site" evidence="1">
    <location>
        <begin position="165"/>
        <end position="166"/>
    </location>
    <ligand>
        <name>(S)-2,3,4,5-tetrahydrodipicolinate</name>
        <dbReference type="ChEBI" id="CHEBI:16845"/>
    </ligand>
</feature>
<reference key="1">
    <citation type="journal article" date="2003" name="Proc. Natl. Acad. Sci. U.S.A.">
        <title>The complete genome sequence of Chromobacterium violaceum reveals remarkable and exploitable bacterial adaptability.</title>
        <authorList>
            <person name="Vasconcelos A.T.R."/>
            <person name="de Almeida D.F."/>
            <person name="Hungria M."/>
            <person name="Guimaraes C.T."/>
            <person name="Antonio R.V."/>
            <person name="Almeida F.C."/>
            <person name="de Almeida L.G.P."/>
            <person name="de Almeida R."/>
            <person name="Alves-Gomes J.A."/>
            <person name="Andrade E.M."/>
            <person name="Araripe J."/>
            <person name="de Araujo M.F.F."/>
            <person name="Astolfi-Filho S."/>
            <person name="Azevedo V."/>
            <person name="Baptista A.J."/>
            <person name="Bataus L.A.M."/>
            <person name="Batista J.S."/>
            <person name="Belo A."/>
            <person name="van den Berg C."/>
            <person name="Bogo M."/>
            <person name="Bonatto S."/>
            <person name="Bordignon J."/>
            <person name="Brigido M.M."/>
            <person name="Brito C.A."/>
            <person name="Brocchi M."/>
            <person name="Burity H.A."/>
            <person name="Camargo A.A."/>
            <person name="Cardoso D.D.P."/>
            <person name="Carneiro N.P."/>
            <person name="Carraro D.M."/>
            <person name="Carvalho C.M.B."/>
            <person name="Cascardo J.C.M."/>
            <person name="Cavada B.S."/>
            <person name="Chueire L.M.O."/>
            <person name="Creczynski-Pasa T.B."/>
            <person name="Cunha-Junior N.C."/>
            <person name="Fagundes N."/>
            <person name="Falcao C.L."/>
            <person name="Fantinatti F."/>
            <person name="Farias I.P."/>
            <person name="Felipe M.S.S."/>
            <person name="Ferrari L.P."/>
            <person name="Ferro J.A."/>
            <person name="Ferro M.I.T."/>
            <person name="Franco G.R."/>
            <person name="Freitas N.S.A."/>
            <person name="Furlan L.R."/>
            <person name="Gazzinelli R.T."/>
            <person name="Gomes E.A."/>
            <person name="Goncalves P.R."/>
            <person name="Grangeiro T.B."/>
            <person name="Grattapaglia D."/>
            <person name="Grisard E.C."/>
            <person name="Hanna E.S."/>
            <person name="Jardim S.N."/>
            <person name="Laurino J."/>
            <person name="Leoi L.C.T."/>
            <person name="Lima L.F.A."/>
            <person name="Loureiro M.F."/>
            <person name="Lyra M.C.C.P."/>
            <person name="Madeira H.M.F."/>
            <person name="Manfio G.P."/>
            <person name="Maranhao A.Q."/>
            <person name="Martins W.S."/>
            <person name="di Mauro S.M.Z."/>
            <person name="de Medeiros S.R.B."/>
            <person name="Meissner R.V."/>
            <person name="Moreira M.A.M."/>
            <person name="Nascimento F.F."/>
            <person name="Nicolas M.F."/>
            <person name="Oliveira J.G."/>
            <person name="Oliveira S.C."/>
            <person name="Paixao R.F.C."/>
            <person name="Parente J.A."/>
            <person name="Pedrosa F.O."/>
            <person name="Pena S.D.J."/>
            <person name="Pereira J.O."/>
            <person name="Pereira M."/>
            <person name="Pinto L.S.R.C."/>
            <person name="Pinto L.S."/>
            <person name="Porto J.I.R."/>
            <person name="Potrich D.P."/>
            <person name="Ramalho-Neto C.E."/>
            <person name="Reis A.M.M."/>
            <person name="Rigo L.U."/>
            <person name="Rondinelli E."/>
            <person name="Santos E.B.P."/>
            <person name="Santos F.R."/>
            <person name="Schneider M.P.C."/>
            <person name="Seuanez H.N."/>
            <person name="Silva A.M.R."/>
            <person name="da Silva A.L.C."/>
            <person name="Silva D.W."/>
            <person name="Silva R."/>
            <person name="Simoes I.C."/>
            <person name="Simon D."/>
            <person name="Soares C.M.A."/>
            <person name="Soares R.B.A."/>
            <person name="Souza E.M."/>
            <person name="Souza K.R.L."/>
            <person name="Souza R.C."/>
            <person name="Steffens M.B.R."/>
            <person name="Steindel M."/>
            <person name="Teixeira S.R."/>
            <person name="Urmenyi T."/>
            <person name="Vettore A."/>
            <person name="Wassem R."/>
            <person name="Zaha A."/>
            <person name="Simpson A.J.G."/>
        </authorList>
    </citation>
    <scope>NUCLEOTIDE SEQUENCE [LARGE SCALE GENOMIC DNA]</scope>
    <source>
        <strain>ATCC 12472 / DSM 30191 / JCM 1249 / CCUG 213 / NBRC 12614 / NCIMB 9131 / NCTC 9757 / MK</strain>
    </source>
</reference>
<gene>
    <name evidence="1" type="primary">dapB</name>
    <name type="ordered locus">CV_1795</name>
</gene>
<sequence length="267" mass="28178">MSQNIVIVGASGRMGRVLIEAVLDAPGARLHAAIDRADSGFVGQDAGLFCGRSSGVFISSDFIAALDGADVVIDFTRPEGTLEHMLACVERGVRMVIGTTGFDDEGKAAIRAAAGKIGIVFASNFSVGVNLTFKLLDMAARVLNEGYDVEIIEAHHRFKVDAPSGTALRMGEVIADALGRDLKQCAVYGREGVTGERDPQAIGFATVRGGDVVGDHTALFAALGERVEISHKASSRATFANGAVRAARWLSDKRNGLFDMQDVLGLR</sequence>
<accession>Q7NX34</accession>
<protein>
    <recommendedName>
        <fullName evidence="1">4-hydroxy-tetrahydrodipicolinate reductase</fullName>
        <shortName evidence="1">HTPA reductase</shortName>
        <ecNumber evidence="1">1.17.1.8</ecNumber>
    </recommendedName>
</protein>
<organism>
    <name type="scientific">Chromobacterium violaceum (strain ATCC 12472 / DSM 30191 / JCM 1249 / CCUG 213 / NBRC 12614 / NCIMB 9131 / NCTC 9757 / MK)</name>
    <dbReference type="NCBI Taxonomy" id="243365"/>
    <lineage>
        <taxon>Bacteria</taxon>
        <taxon>Pseudomonadati</taxon>
        <taxon>Pseudomonadota</taxon>
        <taxon>Betaproteobacteria</taxon>
        <taxon>Neisseriales</taxon>
        <taxon>Chromobacteriaceae</taxon>
        <taxon>Chromobacterium</taxon>
    </lineage>
</organism>
<proteinExistence type="inferred from homology"/>
<name>DAPB_CHRVO</name>
<keyword id="KW-0028">Amino-acid biosynthesis</keyword>
<keyword id="KW-0963">Cytoplasm</keyword>
<keyword id="KW-0220">Diaminopimelate biosynthesis</keyword>
<keyword id="KW-0457">Lysine biosynthesis</keyword>
<keyword id="KW-0520">NAD</keyword>
<keyword id="KW-0521">NADP</keyword>
<keyword id="KW-0560">Oxidoreductase</keyword>
<keyword id="KW-1185">Reference proteome</keyword>
<dbReference type="EC" id="1.17.1.8" evidence="1"/>
<dbReference type="EMBL" id="AE016825">
    <property type="protein sequence ID" value="AAQ59469.1"/>
    <property type="molecule type" value="Genomic_DNA"/>
</dbReference>
<dbReference type="RefSeq" id="WP_011135347.1">
    <property type="nucleotide sequence ID" value="NC_005085.1"/>
</dbReference>
<dbReference type="SMR" id="Q7NX34"/>
<dbReference type="STRING" id="243365.CV_1795"/>
<dbReference type="KEGG" id="cvi:CV_1795"/>
<dbReference type="eggNOG" id="COG0289">
    <property type="taxonomic scope" value="Bacteria"/>
</dbReference>
<dbReference type="HOGENOM" id="CLU_047479_2_1_4"/>
<dbReference type="OrthoDB" id="9790352at2"/>
<dbReference type="UniPathway" id="UPA00034">
    <property type="reaction ID" value="UER00018"/>
</dbReference>
<dbReference type="Proteomes" id="UP000001424">
    <property type="component" value="Chromosome"/>
</dbReference>
<dbReference type="GO" id="GO:0005829">
    <property type="term" value="C:cytosol"/>
    <property type="evidence" value="ECO:0007669"/>
    <property type="project" value="TreeGrafter"/>
</dbReference>
<dbReference type="GO" id="GO:0008839">
    <property type="term" value="F:4-hydroxy-tetrahydrodipicolinate reductase"/>
    <property type="evidence" value="ECO:0007669"/>
    <property type="project" value="UniProtKB-EC"/>
</dbReference>
<dbReference type="GO" id="GO:0051287">
    <property type="term" value="F:NAD binding"/>
    <property type="evidence" value="ECO:0007669"/>
    <property type="project" value="UniProtKB-UniRule"/>
</dbReference>
<dbReference type="GO" id="GO:0050661">
    <property type="term" value="F:NADP binding"/>
    <property type="evidence" value="ECO:0007669"/>
    <property type="project" value="UniProtKB-UniRule"/>
</dbReference>
<dbReference type="GO" id="GO:0016726">
    <property type="term" value="F:oxidoreductase activity, acting on CH or CH2 groups, NAD or NADP as acceptor"/>
    <property type="evidence" value="ECO:0007669"/>
    <property type="project" value="UniProtKB-UniRule"/>
</dbReference>
<dbReference type="GO" id="GO:0019877">
    <property type="term" value="P:diaminopimelate biosynthetic process"/>
    <property type="evidence" value="ECO:0007669"/>
    <property type="project" value="UniProtKB-UniRule"/>
</dbReference>
<dbReference type="GO" id="GO:0009089">
    <property type="term" value="P:lysine biosynthetic process via diaminopimelate"/>
    <property type="evidence" value="ECO:0007669"/>
    <property type="project" value="UniProtKB-UniRule"/>
</dbReference>
<dbReference type="CDD" id="cd02274">
    <property type="entry name" value="DHDPR_N"/>
    <property type="match status" value="1"/>
</dbReference>
<dbReference type="FunFam" id="3.30.360.10:FF:000004">
    <property type="entry name" value="4-hydroxy-tetrahydrodipicolinate reductase"/>
    <property type="match status" value="1"/>
</dbReference>
<dbReference type="FunFam" id="3.40.50.720:FF:000048">
    <property type="entry name" value="4-hydroxy-tetrahydrodipicolinate reductase"/>
    <property type="match status" value="1"/>
</dbReference>
<dbReference type="Gene3D" id="3.30.360.10">
    <property type="entry name" value="Dihydrodipicolinate Reductase, domain 2"/>
    <property type="match status" value="1"/>
</dbReference>
<dbReference type="Gene3D" id="3.40.50.720">
    <property type="entry name" value="NAD(P)-binding Rossmann-like Domain"/>
    <property type="match status" value="1"/>
</dbReference>
<dbReference type="HAMAP" id="MF_00102">
    <property type="entry name" value="DapB"/>
    <property type="match status" value="1"/>
</dbReference>
<dbReference type="InterPro" id="IPR022663">
    <property type="entry name" value="DapB_C"/>
</dbReference>
<dbReference type="InterPro" id="IPR000846">
    <property type="entry name" value="DapB_N"/>
</dbReference>
<dbReference type="InterPro" id="IPR022664">
    <property type="entry name" value="DapB_N_CS"/>
</dbReference>
<dbReference type="InterPro" id="IPR023940">
    <property type="entry name" value="DHDPR_bac"/>
</dbReference>
<dbReference type="InterPro" id="IPR036291">
    <property type="entry name" value="NAD(P)-bd_dom_sf"/>
</dbReference>
<dbReference type="NCBIfam" id="TIGR00036">
    <property type="entry name" value="dapB"/>
    <property type="match status" value="1"/>
</dbReference>
<dbReference type="PANTHER" id="PTHR20836:SF0">
    <property type="entry name" value="4-HYDROXY-TETRAHYDRODIPICOLINATE REDUCTASE 1, CHLOROPLASTIC-RELATED"/>
    <property type="match status" value="1"/>
</dbReference>
<dbReference type="PANTHER" id="PTHR20836">
    <property type="entry name" value="DIHYDRODIPICOLINATE REDUCTASE"/>
    <property type="match status" value="1"/>
</dbReference>
<dbReference type="Pfam" id="PF05173">
    <property type="entry name" value="DapB_C"/>
    <property type="match status" value="1"/>
</dbReference>
<dbReference type="Pfam" id="PF01113">
    <property type="entry name" value="DapB_N"/>
    <property type="match status" value="1"/>
</dbReference>
<dbReference type="PIRSF" id="PIRSF000161">
    <property type="entry name" value="DHPR"/>
    <property type="match status" value="1"/>
</dbReference>
<dbReference type="SUPFAM" id="SSF55347">
    <property type="entry name" value="Glyceraldehyde-3-phosphate dehydrogenase-like, C-terminal domain"/>
    <property type="match status" value="1"/>
</dbReference>
<dbReference type="SUPFAM" id="SSF51735">
    <property type="entry name" value="NAD(P)-binding Rossmann-fold domains"/>
    <property type="match status" value="1"/>
</dbReference>
<dbReference type="PROSITE" id="PS01298">
    <property type="entry name" value="DAPB"/>
    <property type="match status" value="1"/>
</dbReference>